<organism>
    <name type="scientific">Bacillus cereus (strain G9842)</name>
    <dbReference type="NCBI Taxonomy" id="405531"/>
    <lineage>
        <taxon>Bacteria</taxon>
        <taxon>Bacillati</taxon>
        <taxon>Bacillota</taxon>
        <taxon>Bacilli</taxon>
        <taxon>Bacillales</taxon>
        <taxon>Bacillaceae</taxon>
        <taxon>Bacillus</taxon>
        <taxon>Bacillus cereus group</taxon>
    </lineage>
</organism>
<feature type="chain" id="PRO_1000146673" description="Formate--tetrahydrofolate ligase">
    <location>
        <begin position="1"/>
        <end position="562"/>
    </location>
</feature>
<feature type="binding site" evidence="1">
    <location>
        <begin position="71"/>
        <end position="78"/>
    </location>
    <ligand>
        <name>ATP</name>
        <dbReference type="ChEBI" id="CHEBI:30616"/>
    </ligand>
</feature>
<accession>B7IUA4</accession>
<gene>
    <name evidence="1" type="primary">fhs</name>
    <name type="ordered locus">BCG9842_B3197</name>
</gene>
<proteinExistence type="inferred from homology"/>
<comment type="catalytic activity">
    <reaction evidence="1">
        <text>(6S)-5,6,7,8-tetrahydrofolate + formate + ATP = (6R)-10-formyltetrahydrofolate + ADP + phosphate</text>
        <dbReference type="Rhea" id="RHEA:20221"/>
        <dbReference type="ChEBI" id="CHEBI:15740"/>
        <dbReference type="ChEBI" id="CHEBI:30616"/>
        <dbReference type="ChEBI" id="CHEBI:43474"/>
        <dbReference type="ChEBI" id="CHEBI:57453"/>
        <dbReference type="ChEBI" id="CHEBI:195366"/>
        <dbReference type="ChEBI" id="CHEBI:456216"/>
        <dbReference type="EC" id="6.3.4.3"/>
    </reaction>
</comment>
<comment type="pathway">
    <text evidence="1">One-carbon metabolism; tetrahydrofolate interconversion.</text>
</comment>
<comment type="similarity">
    <text evidence="1">Belongs to the formate--tetrahydrofolate ligase family.</text>
</comment>
<keyword id="KW-0067">ATP-binding</keyword>
<keyword id="KW-0436">Ligase</keyword>
<keyword id="KW-0547">Nucleotide-binding</keyword>
<keyword id="KW-0554">One-carbon metabolism</keyword>
<evidence type="ECO:0000255" key="1">
    <source>
        <dbReference type="HAMAP-Rule" id="MF_01543"/>
    </source>
</evidence>
<name>FTHS_BACC2</name>
<sequence length="562" mass="60479">MTTTTTVKSDIEIAQEASMKKIQEIAADLNILEDELEPYGHYKGKLSLDIFKRLQDEKDGKVVLVTAINPTPAGEGKSTVTVGLGQAFNKIGKKTVIALREPSLGPTMGLKGGAAGGGFSQVVPMEDINLHFTGDIHAITTANNALAAFIDNHIQQGNTLGIDTRKIVWKRCVDLNDRALRNVVIGLGGPVQGVPREDGFDITVASEIMAVFCLATDIQDLKARLSRIVVAYNFANQPVTVKDLGVEGALTLLLKDALKPNLVQTLENTPAIIHGGPFANIAHGCNSVIATTMAAKLGDYVITEAGFGADLGAEKFLDIKARAAGIKPEAVVIVATIRALKMHGGVAKDQLKEENVDALAKGMENLQKHVETIQSFGVPFVIAINKFITDTDAEVTYLQEWCNERGYAVSLTEVWEKGGQGGVDLAEKVLKEIEKGENNYAPLYELELPLEEKIRTIAQKVYGAKDIEFAPKARKQLAQYEGEGWSNLPVCMAKTQYSLSDDATKLGRPSDFIVTIRELKPSIGAGFIVALTGTMLTMPGLPKQPAALQMDVNEDGKAVGLF</sequence>
<dbReference type="EC" id="6.3.4.3" evidence="1"/>
<dbReference type="EMBL" id="CP001186">
    <property type="protein sequence ID" value="ACK93851.1"/>
    <property type="molecule type" value="Genomic_DNA"/>
</dbReference>
<dbReference type="RefSeq" id="WP_014482011.1">
    <property type="nucleotide sequence ID" value="NC_011772.1"/>
</dbReference>
<dbReference type="SMR" id="B7IUA4"/>
<dbReference type="KEGG" id="bcg:BCG9842_B3197"/>
<dbReference type="HOGENOM" id="CLU_003601_3_3_9"/>
<dbReference type="UniPathway" id="UPA00193"/>
<dbReference type="Proteomes" id="UP000006744">
    <property type="component" value="Chromosome"/>
</dbReference>
<dbReference type="GO" id="GO:0005524">
    <property type="term" value="F:ATP binding"/>
    <property type="evidence" value="ECO:0007669"/>
    <property type="project" value="UniProtKB-UniRule"/>
</dbReference>
<dbReference type="GO" id="GO:0004329">
    <property type="term" value="F:formate-tetrahydrofolate ligase activity"/>
    <property type="evidence" value="ECO:0007669"/>
    <property type="project" value="UniProtKB-UniRule"/>
</dbReference>
<dbReference type="GO" id="GO:0035999">
    <property type="term" value="P:tetrahydrofolate interconversion"/>
    <property type="evidence" value="ECO:0007669"/>
    <property type="project" value="UniProtKB-UniRule"/>
</dbReference>
<dbReference type="CDD" id="cd00477">
    <property type="entry name" value="FTHFS"/>
    <property type="match status" value="1"/>
</dbReference>
<dbReference type="FunFam" id="3.30.1510.10:FF:000001">
    <property type="entry name" value="Formate--tetrahydrofolate ligase"/>
    <property type="match status" value="1"/>
</dbReference>
<dbReference type="FunFam" id="3.10.410.10:FF:000001">
    <property type="entry name" value="Putative formate--tetrahydrofolate ligase"/>
    <property type="match status" value="1"/>
</dbReference>
<dbReference type="Gene3D" id="3.30.1510.10">
    <property type="entry name" value="Domain 2, N(10)-formyltetrahydrofolate synthetase"/>
    <property type="match status" value="1"/>
</dbReference>
<dbReference type="Gene3D" id="3.10.410.10">
    <property type="entry name" value="Formyltetrahydrofolate synthetase, domain 3"/>
    <property type="match status" value="1"/>
</dbReference>
<dbReference type="Gene3D" id="3.40.50.300">
    <property type="entry name" value="P-loop containing nucleotide triphosphate hydrolases"/>
    <property type="match status" value="1"/>
</dbReference>
<dbReference type="HAMAP" id="MF_01543">
    <property type="entry name" value="FTHFS"/>
    <property type="match status" value="1"/>
</dbReference>
<dbReference type="InterPro" id="IPR000559">
    <property type="entry name" value="Formate_THF_ligase"/>
</dbReference>
<dbReference type="InterPro" id="IPR020628">
    <property type="entry name" value="Formate_THF_ligase_CS"/>
</dbReference>
<dbReference type="InterPro" id="IPR027417">
    <property type="entry name" value="P-loop_NTPase"/>
</dbReference>
<dbReference type="NCBIfam" id="NF010030">
    <property type="entry name" value="PRK13505.1"/>
    <property type="match status" value="1"/>
</dbReference>
<dbReference type="Pfam" id="PF01268">
    <property type="entry name" value="FTHFS"/>
    <property type="match status" value="1"/>
</dbReference>
<dbReference type="SUPFAM" id="SSF52540">
    <property type="entry name" value="P-loop containing nucleoside triphosphate hydrolases"/>
    <property type="match status" value="1"/>
</dbReference>
<dbReference type="PROSITE" id="PS00721">
    <property type="entry name" value="FTHFS_1"/>
    <property type="match status" value="1"/>
</dbReference>
<dbReference type="PROSITE" id="PS00722">
    <property type="entry name" value="FTHFS_2"/>
    <property type="match status" value="1"/>
</dbReference>
<reference key="1">
    <citation type="submission" date="2008-10" db="EMBL/GenBank/DDBJ databases">
        <title>Genome sequence of Bacillus cereus G9842.</title>
        <authorList>
            <person name="Dodson R.J."/>
            <person name="Durkin A.S."/>
            <person name="Rosovitz M.J."/>
            <person name="Rasko D.A."/>
            <person name="Hoffmaster A."/>
            <person name="Ravel J."/>
            <person name="Sutton G."/>
        </authorList>
    </citation>
    <scope>NUCLEOTIDE SEQUENCE [LARGE SCALE GENOMIC DNA]</scope>
    <source>
        <strain>G9842</strain>
    </source>
</reference>
<protein>
    <recommendedName>
        <fullName evidence="1">Formate--tetrahydrofolate ligase</fullName>
        <ecNumber evidence="1">6.3.4.3</ecNumber>
    </recommendedName>
    <alternativeName>
        <fullName evidence="1">Formyltetrahydrofolate synthetase</fullName>
        <shortName evidence="1">FHS</shortName>
        <shortName evidence="1">FTHFS</shortName>
    </alternativeName>
</protein>